<reference key="1">
    <citation type="journal article" date="2002" name="Proc. Natl. Acad. Sci. U.S.A.">
        <title>Extensive mosaic structure revealed by the complete genome sequence of uropathogenic Escherichia coli.</title>
        <authorList>
            <person name="Welch R.A."/>
            <person name="Burland V."/>
            <person name="Plunkett G. III"/>
            <person name="Redford P."/>
            <person name="Roesch P."/>
            <person name="Rasko D."/>
            <person name="Buckles E.L."/>
            <person name="Liou S.-R."/>
            <person name="Boutin A."/>
            <person name="Hackett J."/>
            <person name="Stroud D."/>
            <person name="Mayhew G.F."/>
            <person name="Rose D.J."/>
            <person name="Zhou S."/>
            <person name="Schwartz D.C."/>
            <person name="Perna N.T."/>
            <person name="Mobley H.L.T."/>
            <person name="Donnenberg M.S."/>
            <person name="Blattner F.R."/>
        </authorList>
    </citation>
    <scope>NUCLEOTIDE SEQUENCE [LARGE SCALE GENOMIC DNA]</scope>
    <source>
        <strain>CFT073 / ATCC 700928 / UPEC</strain>
    </source>
</reference>
<dbReference type="EMBL" id="AE014075">
    <property type="protein sequence ID" value="AAN82469.1"/>
    <property type="status" value="ALT_INIT"/>
    <property type="molecule type" value="Genomic_DNA"/>
</dbReference>
<dbReference type="RefSeq" id="WP_001295275.1">
    <property type="nucleotide sequence ID" value="NZ_CP051263.1"/>
</dbReference>
<dbReference type="SMR" id="P64620"/>
<dbReference type="STRING" id="199310.c4029"/>
<dbReference type="KEGG" id="ecc:c4029"/>
<dbReference type="eggNOG" id="ENOG50331MQ">
    <property type="taxonomic scope" value="Bacteria"/>
</dbReference>
<dbReference type="HOGENOM" id="CLU_2914126_0_0_6"/>
<dbReference type="Proteomes" id="UP000001410">
    <property type="component" value="Chromosome"/>
</dbReference>
<dbReference type="GO" id="GO:0016020">
    <property type="term" value="C:membrane"/>
    <property type="evidence" value="ECO:0007669"/>
    <property type="project" value="UniProtKB-SubCell"/>
</dbReference>
<dbReference type="InterPro" id="IPR022540">
    <property type="entry name" value="DUF2556"/>
</dbReference>
<dbReference type="Pfam" id="PF10831">
    <property type="entry name" value="DUF2556"/>
    <property type="match status" value="1"/>
</dbReference>
<proteinExistence type="predicted"/>
<sequence length="59" mass="7204">MIRKYWWLVVFAVFVFLFDTLLMQWIELLATETDKCRNMNSVNPLKLVNCDELNFQDRM</sequence>
<feature type="chain" id="PRO_0000169501" description="Uncharacterized protein YhdU">
    <location>
        <begin position="1"/>
        <end position="59"/>
    </location>
</feature>
<feature type="transmembrane region" description="Helical" evidence="1">
    <location>
        <begin position="6"/>
        <end position="26"/>
    </location>
</feature>
<gene>
    <name type="primary">yhdU</name>
    <name type="ordered locus">c4029</name>
</gene>
<name>YHDU_ECOL6</name>
<comment type="subcellular location">
    <subcellularLocation>
        <location evidence="2">Membrane</location>
        <topology evidence="2">Single-pass membrane protein</topology>
    </subcellularLocation>
</comment>
<comment type="sequence caution" evidence="2">
    <conflict type="erroneous initiation">
        <sequence resource="EMBL-CDS" id="AAN82469"/>
    </conflict>
</comment>
<keyword id="KW-0472">Membrane</keyword>
<keyword id="KW-1185">Reference proteome</keyword>
<keyword id="KW-0812">Transmembrane</keyword>
<keyword id="KW-1133">Transmembrane helix</keyword>
<accession>P64620</accession>
<accession>P45764</accession>
<organism>
    <name type="scientific">Escherichia coli O6:H1 (strain CFT073 / ATCC 700928 / UPEC)</name>
    <dbReference type="NCBI Taxonomy" id="199310"/>
    <lineage>
        <taxon>Bacteria</taxon>
        <taxon>Pseudomonadati</taxon>
        <taxon>Pseudomonadota</taxon>
        <taxon>Gammaproteobacteria</taxon>
        <taxon>Enterobacterales</taxon>
        <taxon>Enterobacteriaceae</taxon>
        <taxon>Escherichia</taxon>
    </lineage>
</organism>
<protein>
    <recommendedName>
        <fullName>Uncharacterized protein YhdU</fullName>
    </recommendedName>
</protein>
<evidence type="ECO:0000255" key="1"/>
<evidence type="ECO:0000305" key="2"/>